<organism>
    <name type="scientific">Teredinibacter turnerae (strain ATCC 39867 / T7901)</name>
    <dbReference type="NCBI Taxonomy" id="377629"/>
    <lineage>
        <taxon>Bacteria</taxon>
        <taxon>Pseudomonadati</taxon>
        <taxon>Pseudomonadota</taxon>
        <taxon>Gammaproteobacteria</taxon>
        <taxon>Cellvibrionales</taxon>
        <taxon>Cellvibrionaceae</taxon>
        <taxon>Teredinibacter</taxon>
    </lineage>
</organism>
<comment type="subcellular location">
    <subcellularLocation>
        <location evidence="1">Cell membrane</location>
        <topology evidence="1">Multi-pass membrane protein</topology>
    </subcellularLocation>
</comment>
<comment type="similarity">
    <text evidence="1">Belongs to the UPF0391 family.</text>
</comment>
<keyword id="KW-1003">Cell membrane</keyword>
<keyword id="KW-0472">Membrane</keyword>
<keyword id="KW-1185">Reference proteome</keyword>
<keyword id="KW-0812">Transmembrane</keyword>
<keyword id="KW-1133">Transmembrane helix</keyword>
<reference key="1">
    <citation type="journal article" date="2009" name="PLoS ONE">
        <title>The complete genome of Teredinibacter turnerae T7901: an intracellular endosymbiont of marine wood-boring bivalves (shipworms).</title>
        <authorList>
            <person name="Yang J.C."/>
            <person name="Madupu R."/>
            <person name="Durkin A.S."/>
            <person name="Ekborg N.A."/>
            <person name="Pedamallu C.S."/>
            <person name="Hostetler J.B."/>
            <person name="Radune D."/>
            <person name="Toms B.S."/>
            <person name="Henrissat B."/>
            <person name="Coutinho P.M."/>
            <person name="Schwarz S."/>
            <person name="Field L."/>
            <person name="Trindade-Silva A.E."/>
            <person name="Soares C.A.G."/>
            <person name="Elshahawi S."/>
            <person name="Hanora A."/>
            <person name="Schmidt E.W."/>
            <person name="Haygood M.G."/>
            <person name="Posfai J."/>
            <person name="Benner J."/>
            <person name="Madinger C."/>
            <person name="Nove J."/>
            <person name="Anton B."/>
            <person name="Chaudhary K."/>
            <person name="Foster J."/>
            <person name="Holman A."/>
            <person name="Kumar S."/>
            <person name="Lessard P.A."/>
            <person name="Luyten Y.A."/>
            <person name="Slatko B."/>
            <person name="Wood N."/>
            <person name="Wu B."/>
            <person name="Teplitski M."/>
            <person name="Mougous J.D."/>
            <person name="Ward N."/>
            <person name="Eisen J.A."/>
            <person name="Badger J.H."/>
            <person name="Distel D.L."/>
        </authorList>
    </citation>
    <scope>NUCLEOTIDE SEQUENCE [LARGE SCALE GENOMIC DNA]</scope>
    <source>
        <strain>ATCC 39867 / T7901</strain>
    </source>
</reference>
<protein>
    <recommendedName>
        <fullName evidence="1">UPF0391 membrane protein TERTU_3637</fullName>
    </recommendedName>
</protein>
<accession>C6AR43</accession>
<sequence length="54" mass="5683">MFSWALVFLIFALVAGVLGFTGLAGTASSIAWILFVVGLIVSLIFLVAGRRPTV</sequence>
<name>Y3637_TERTT</name>
<proteinExistence type="inferred from homology"/>
<feature type="chain" id="PRO_1000214878" description="UPF0391 membrane protein TERTU_3637">
    <location>
        <begin position="1"/>
        <end position="54"/>
    </location>
</feature>
<feature type="transmembrane region" description="Helical" evidence="1">
    <location>
        <begin position="4"/>
        <end position="24"/>
    </location>
</feature>
<feature type="transmembrane region" description="Helical" evidence="1">
    <location>
        <begin position="29"/>
        <end position="49"/>
    </location>
</feature>
<dbReference type="EMBL" id="CP001614">
    <property type="protein sequence ID" value="ACS93587.1"/>
    <property type="molecule type" value="Genomic_DNA"/>
</dbReference>
<dbReference type="RefSeq" id="WP_015820981.1">
    <property type="nucleotide sequence ID" value="NC_012997.1"/>
</dbReference>
<dbReference type="SMR" id="C6AR43"/>
<dbReference type="STRING" id="377629.TERTU_3637"/>
<dbReference type="GeneID" id="58411501"/>
<dbReference type="KEGG" id="ttu:TERTU_3637"/>
<dbReference type="eggNOG" id="COG5487">
    <property type="taxonomic scope" value="Bacteria"/>
</dbReference>
<dbReference type="HOGENOM" id="CLU_187346_2_1_6"/>
<dbReference type="OrthoDB" id="5461362at2"/>
<dbReference type="Proteomes" id="UP000009080">
    <property type="component" value="Chromosome"/>
</dbReference>
<dbReference type="GO" id="GO:0005886">
    <property type="term" value="C:plasma membrane"/>
    <property type="evidence" value="ECO:0007669"/>
    <property type="project" value="UniProtKB-SubCell"/>
</dbReference>
<dbReference type="HAMAP" id="MF_01361">
    <property type="entry name" value="UPF0391"/>
    <property type="match status" value="1"/>
</dbReference>
<dbReference type="InterPro" id="IPR009760">
    <property type="entry name" value="DUF1328"/>
</dbReference>
<dbReference type="NCBIfam" id="NF010229">
    <property type="entry name" value="PRK13682.1-4"/>
    <property type="match status" value="1"/>
</dbReference>
<dbReference type="Pfam" id="PF07043">
    <property type="entry name" value="DUF1328"/>
    <property type="match status" value="1"/>
</dbReference>
<dbReference type="PIRSF" id="PIRSF036466">
    <property type="entry name" value="UCP036466"/>
    <property type="match status" value="1"/>
</dbReference>
<gene>
    <name type="ordered locus">TERTU_3637</name>
</gene>
<evidence type="ECO:0000255" key="1">
    <source>
        <dbReference type="HAMAP-Rule" id="MF_01361"/>
    </source>
</evidence>